<gene>
    <name type="primary">PYCR2</name>
</gene>
<evidence type="ECO:0000250" key="1">
    <source>
        <dbReference type="UniProtKB" id="P32322"/>
    </source>
</evidence>
<evidence type="ECO:0000250" key="2">
    <source>
        <dbReference type="UniProtKB" id="Q96C36"/>
    </source>
</evidence>
<evidence type="ECO:0000256" key="3">
    <source>
        <dbReference type="SAM" id="MobiDB-lite"/>
    </source>
</evidence>
<evidence type="ECO:0000305" key="4"/>
<dbReference type="EC" id="1.5.1.2" evidence="2"/>
<dbReference type="EMBL" id="CR858959">
    <property type="protein sequence ID" value="CAH91157.1"/>
    <property type="molecule type" value="mRNA"/>
</dbReference>
<dbReference type="RefSeq" id="NP_001125676.1">
    <property type="nucleotide sequence ID" value="NM_001132204.1"/>
</dbReference>
<dbReference type="SMR" id="Q5RAQ3"/>
<dbReference type="FunCoup" id="Q5RAQ3">
    <property type="interactions" value="1509"/>
</dbReference>
<dbReference type="STRING" id="9601.ENSPPYP00000000169"/>
<dbReference type="GeneID" id="100172597"/>
<dbReference type="CTD" id="29920"/>
<dbReference type="eggNOG" id="KOG3124">
    <property type="taxonomic scope" value="Eukaryota"/>
</dbReference>
<dbReference type="InParanoid" id="Q5RAQ3"/>
<dbReference type="OrthoDB" id="10263291at2759"/>
<dbReference type="UniPathway" id="UPA00098">
    <property type="reaction ID" value="UER00361"/>
</dbReference>
<dbReference type="Proteomes" id="UP000001595">
    <property type="component" value="Unplaced"/>
</dbReference>
<dbReference type="GO" id="GO:0005739">
    <property type="term" value="C:mitochondrion"/>
    <property type="evidence" value="ECO:0000250"/>
    <property type="project" value="UniProtKB"/>
</dbReference>
<dbReference type="GO" id="GO:0004735">
    <property type="term" value="F:pyrroline-5-carboxylate reductase activity"/>
    <property type="evidence" value="ECO:0000250"/>
    <property type="project" value="UniProtKB"/>
</dbReference>
<dbReference type="GO" id="GO:0034599">
    <property type="term" value="P:cellular response to oxidative stress"/>
    <property type="evidence" value="ECO:0000250"/>
    <property type="project" value="UniProtKB"/>
</dbReference>
<dbReference type="GO" id="GO:0055129">
    <property type="term" value="P:L-proline biosynthetic process"/>
    <property type="evidence" value="ECO:0007669"/>
    <property type="project" value="UniProtKB-UniPathway"/>
</dbReference>
<dbReference type="GO" id="GO:0006561">
    <property type="term" value="P:proline biosynthetic process"/>
    <property type="evidence" value="ECO:0000250"/>
    <property type="project" value="UniProtKB"/>
</dbReference>
<dbReference type="FunFam" id="3.40.50.720:FF:000064">
    <property type="entry name" value="Pyrroline-5-carboxylate reductase 1"/>
    <property type="match status" value="1"/>
</dbReference>
<dbReference type="FunFam" id="1.10.3730.10:FF:000003">
    <property type="entry name" value="Pyrroline-5-carboxylate reductase 1, mitochondrial"/>
    <property type="match status" value="1"/>
</dbReference>
<dbReference type="Gene3D" id="3.40.50.720">
    <property type="entry name" value="NAD(P)-binding Rossmann-like Domain"/>
    <property type="match status" value="1"/>
</dbReference>
<dbReference type="Gene3D" id="1.10.3730.10">
    <property type="entry name" value="ProC C-terminal domain-like"/>
    <property type="match status" value="1"/>
</dbReference>
<dbReference type="HAMAP" id="MF_01925">
    <property type="entry name" value="P5C_reductase"/>
    <property type="match status" value="1"/>
</dbReference>
<dbReference type="InterPro" id="IPR008927">
    <property type="entry name" value="6-PGluconate_DH-like_C_sf"/>
</dbReference>
<dbReference type="InterPro" id="IPR036291">
    <property type="entry name" value="NAD(P)-bd_dom_sf"/>
</dbReference>
<dbReference type="InterPro" id="IPR028939">
    <property type="entry name" value="P5C_Rdtase_cat_N"/>
</dbReference>
<dbReference type="InterPro" id="IPR053790">
    <property type="entry name" value="P5CR-like_CS"/>
</dbReference>
<dbReference type="InterPro" id="IPR029036">
    <property type="entry name" value="P5CR_dimer"/>
</dbReference>
<dbReference type="InterPro" id="IPR000304">
    <property type="entry name" value="Pyrroline-COOH_reductase"/>
</dbReference>
<dbReference type="NCBIfam" id="TIGR00112">
    <property type="entry name" value="proC"/>
    <property type="match status" value="1"/>
</dbReference>
<dbReference type="PANTHER" id="PTHR11645">
    <property type="entry name" value="PYRROLINE-5-CARBOXYLATE REDUCTASE"/>
    <property type="match status" value="1"/>
</dbReference>
<dbReference type="PANTHER" id="PTHR11645:SF61">
    <property type="entry name" value="PYRROLINE-5-CARBOXYLATE REDUCTASE 2"/>
    <property type="match status" value="1"/>
</dbReference>
<dbReference type="Pfam" id="PF03807">
    <property type="entry name" value="F420_oxidored"/>
    <property type="match status" value="1"/>
</dbReference>
<dbReference type="Pfam" id="PF14748">
    <property type="entry name" value="P5CR_dimer"/>
    <property type="match status" value="1"/>
</dbReference>
<dbReference type="PIRSF" id="PIRSF000193">
    <property type="entry name" value="Pyrrol-5-carb_rd"/>
    <property type="match status" value="1"/>
</dbReference>
<dbReference type="SUPFAM" id="SSF48179">
    <property type="entry name" value="6-phosphogluconate dehydrogenase C-terminal domain-like"/>
    <property type="match status" value="1"/>
</dbReference>
<dbReference type="SUPFAM" id="SSF51735">
    <property type="entry name" value="NAD(P)-binding Rossmann-fold domains"/>
    <property type="match status" value="1"/>
</dbReference>
<dbReference type="PROSITE" id="PS00521">
    <property type="entry name" value="P5CR"/>
    <property type="match status" value="1"/>
</dbReference>
<sequence length="320" mass="33538">MSVGFIGAGQLAYALARGFTAAGILSAHKIIASSPEMNLPTVSALRKMGVNLTRSNKETVKHSDVLFLAVKPHIIPFILDEIGADVQAGHIVVSCAAGVTISSVEKKLMAFQPAPKVIRCMTNTPVVVQEGATVYATGTHALVEDGQLLEQLMSSVGFCTEVEEDLIDAVTGLSGSGPAYAFMALDALADGGVKMGLPRRLAIQLGAQALLGAAKMLLDSEQHPCQLKDNVCSPGGATIHALHFLESGGFRSLLINAVEASCIRTRELQSMADQEKISPAALKKTLLDRVKLESPTVSTLTPSSPGKLLTRSLALGGKKD</sequence>
<accession>Q5RAQ3</accession>
<protein>
    <recommendedName>
        <fullName>Pyrroline-5-carboxylate reductase 2</fullName>
        <shortName>P5C reductase 2</shortName>
        <shortName>P5CR 2</shortName>
        <ecNumber evidence="2">1.5.1.2</ecNumber>
    </recommendedName>
</protein>
<reference key="1">
    <citation type="submission" date="2004-11" db="EMBL/GenBank/DDBJ databases">
        <authorList>
            <consortium name="The German cDNA consortium"/>
        </authorList>
    </citation>
    <scope>NUCLEOTIDE SEQUENCE [LARGE SCALE MRNA]</scope>
    <source>
        <tissue>Heart</tissue>
    </source>
</reference>
<proteinExistence type="evidence at transcript level"/>
<keyword id="KW-0007">Acetylation</keyword>
<keyword id="KW-0028">Amino-acid biosynthesis</keyword>
<keyword id="KW-0963">Cytoplasm</keyword>
<keyword id="KW-0496">Mitochondrion</keyword>
<keyword id="KW-0521">NADP</keyword>
<keyword id="KW-0560">Oxidoreductase</keyword>
<keyword id="KW-0597">Phosphoprotein</keyword>
<keyword id="KW-0641">Proline biosynthesis</keyword>
<keyword id="KW-1185">Reference proteome</keyword>
<comment type="function">
    <text evidence="2">Oxidoreductase that catalyzes the last step in proline biosynthesis, which corresponds to the reduction of pyrroline-5-carboxylate to L-proline using NAD(P)H. At physiologic concentrations, has higher specific activity in the presence of NADH. Involved in cellular response to oxidative stress. In some cell types, such as erythrocytes, its primary function may be the generation of NADP(+).</text>
</comment>
<comment type="catalytic activity">
    <reaction evidence="2">
        <text>L-proline + NADP(+) = (S)-1-pyrroline-5-carboxylate + NADPH + 2 H(+)</text>
        <dbReference type="Rhea" id="RHEA:14109"/>
        <dbReference type="ChEBI" id="CHEBI:15378"/>
        <dbReference type="ChEBI" id="CHEBI:17388"/>
        <dbReference type="ChEBI" id="CHEBI:57783"/>
        <dbReference type="ChEBI" id="CHEBI:58349"/>
        <dbReference type="ChEBI" id="CHEBI:60039"/>
        <dbReference type="EC" id="1.5.1.2"/>
    </reaction>
    <physiologicalReaction direction="right-to-left" evidence="2">
        <dbReference type="Rhea" id="RHEA:14111"/>
    </physiologicalReaction>
</comment>
<comment type="catalytic activity">
    <reaction evidence="2">
        <text>L-proline + NAD(+) = (S)-1-pyrroline-5-carboxylate + NADH + 2 H(+)</text>
        <dbReference type="Rhea" id="RHEA:14105"/>
        <dbReference type="ChEBI" id="CHEBI:15378"/>
        <dbReference type="ChEBI" id="CHEBI:17388"/>
        <dbReference type="ChEBI" id="CHEBI:57540"/>
        <dbReference type="ChEBI" id="CHEBI:57945"/>
        <dbReference type="ChEBI" id="CHEBI:60039"/>
        <dbReference type="EC" id="1.5.1.2"/>
    </reaction>
    <physiologicalReaction direction="right-to-left" evidence="2">
        <dbReference type="Rhea" id="RHEA:14107"/>
    </physiologicalReaction>
</comment>
<comment type="pathway">
    <text>Amino-acid biosynthesis; L-proline biosynthesis; L-proline from L-glutamate 5-semialdehyde: step 1/1.</text>
</comment>
<comment type="subunit">
    <text evidence="2">Homodecamer; composed of 5 homodimers. Interacts with LTO1.</text>
</comment>
<comment type="subcellular location">
    <subcellularLocation>
        <location evidence="2">Cytoplasm</location>
    </subcellularLocation>
    <subcellularLocation>
        <location evidence="2">Mitochondrion</location>
    </subcellularLocation>
</comment>
<comment type="similarity">
    <text evidence="4">Belongs to the pyrroline-5-carboxylate reductase family.</text>
</comment>
<organism>
    <name type="scientific">Pongo abelii</name>
    <name type="common">Sumatran orangutan</name>
    <name type="synonym">Pongo pygmaeus abelii</name>
    <dbReference type="NCBI Taxonomy" id="9601"/>
    <lineage>
        <taxon>Eukaryota</taxon>
        <taxon>Metazoa</taxon>
        <taxon>Chordata</taxon>
        <taxon>Craniata</taxon>
        <taxon>Vertebrata</taxon>
        <taxon>Euteleostomi</taxon>
        <taxon>Mammalia</taxon>
        <taxon>Eutheria</taxon>
        <taxon>Euarchontoglires</taxon>
        <taxon>Primates</taxon>
        <taxon>Haplorrhini</taxon>
        <taxon>Catarrhini</taxon>
        <taxon>Hominidae</taxon>
        <taxon>Pongo</taxon>
    </lineage>
</organism>
<name>P5CR2_PONAB</name>
<feature type="initiator methionine" description="Removed" evidence="2">
    <location>
        <position position="1"/>
    </location>
</feature>
<feature type="chain" id="PRO_0000187319" description="Pyrroline-5-carboxylate reductase 2">
    <location>
        <begin position="2"/>
        <end position="320"/>
    </location>
</feature>
<feature type="region of interest" description="Disordered" evidence="3">
    <location>
        <begin position="296"/>
        <end position="320"/>
    </location>
</feature>
<feature type="compositionally biased region" description="Low complexity" evidence="3">
    <location>
        <begin position="296"/>
        <end position="305"/>
    </location>
</feature>
<feature type="binding site" evidence="1">
    <location>
        <begin position="6"/>
        <end position="11"/>
    </location>
    <ligand>
        <name>NADP(+)</name>
        <dbReference type="ChEBI" id="CHEBI:58349"/>
    </ligand>
</feature>
<feature type="binding site" evidence="1">
    <location>
        <position position="8"/>
    </location>
    <ligand>
        <name>NADPH</name>
        <dbReference type="ChEBI" id="CHEBI:57783"/>
    </ligand>
</feature>
<feature type="binding site" evidence="1">
    <location>
        <position position="10"/>
    </location>
    <ligand>
        <name>NADPH</name>
        <dbReference type="ChEBI" id="CHEBI:57783"/>
    </ligand>
</feature>
<feature type="binding site" evidence="1">
    <location>
        <position position="11"/>
    </location>
    <ligand>
        <name>NADPH</name>
        <dbReference type="ChEBI" id="CHEBI:57783"/>
    </ligand>
</feature>
<feature type="binding site" evidence="1">
    <location>
        <position position="34"/>
    </location>
    <ligand>
        <name>NADP(+)</name>
        <dbReference type="ChEBI" id="CHEBI:58349"/>
    </ligand>
</feature>
<feature type="binding site" evidence="1">
    <location>
        <position position="34"/>
    </location>
    <ligand>
        <name>NADPH</name>
        <dbReference type="ChEBI" id="CHEBI:57783"/>
    </ligand>
</feature>
<feature type="binding site" evidence="1">
    <location>
        <position position="36"/>
    </location>
    <ligand>
        <name>NADPH</name>
        <dbReference type="ChEBI" id="CHEBI:57783"/>
    </ligand>
</feature>
<feature type="binding site" evidence="1">
    <location>
        <position position="56"/>
    </location>
    <ligand>
        <name>NADP(+)</name>
        <dbReference type="ChEBI" id="CHEBI:58349"/>
    </ligand>
</feature>
<feature type="binding site" evidence="1">
    <location>
        <position position="56"/>
    </location>
    <ligand>
        <name>NADPH</name>
        <dbReference type="ChEBI" id="CHEBI:57783"/>
    </ligand>
</feature>
<feature type="binding site" evidence="1">
    <location>
        <begin position="69"/>
        <end position="72"/>
    </location>
    <ligand>
        <name>NADP(+)</name>
        <dbReference type="ChEBI" id="CHEBI:58349"/>
    </ligand>
</feature>
<feature type="binding site" evidence="1">
    <location>
        <position position="70"/>
    </location>
    <ligand>
        <name>NADPH</name>
        <dbReference type="ChEBI" id="CHEBI:57783"/>
    </ligand>
</feature>
<feature type="binding site" evidence="1">
    <location>
        <position position="71"/>
    </location>
    <ligand>
        <name>NADPH</name>
        <dbReference type="ChEBI" id="CHEBI:57783"/>
    </ligand>
</feature>
<feature type="binding site" evidence="1">
    <location>
        <begin position="95"/>
        <end position="97"/>
    </location>
    <ligand>
        <name>NADP(+)</name>
        <dbReference type="ChEBI" id="CHEBI:58349"/>
    </ligand>
</feature>
<feature type="binding site" evidence="1">
    <location>
        <position position="97"/>
    </location>
    <ligand>
        <name>NADPH</name>
        <dbReference type="ChEBI" id="CHEBI:57783"/>
    </ligand>
</feature>
<feature type="binding site" evidence="1">
    <location>
        <position position="164"/>
    </location>
    <ligand>
        <name>L-proline</name>
        <dbReference type="ChEBI" id="CHEBI:60039"/>
    </ligand>
</feature>
<feature type="binding site" evidence="1">
    <location>
        <position position="230"/>
    </location>
    <ligand>
        <name>NADPH</name>
        <dbReference type="ChEBI" id="CHEBI:57783"/>
    </ligand>
</feature>
<feature type="binding site" evidence="1">
    <location>
        <position position="237"/>
    </location>
    <ligand>
        <name>L-proline</name>
        <dbReference type="ChEBI" id="CHEBI:60039"/>
    </ligand>
</feature>
<feature type="binding site" evidence="1">
    <location>
        <position position="238"/>
    </location>
    <ligand>
        <name>L-proline</name>
        <dbReference type="ChEBI" id="CHEBI:60039"/>
    </ligand>
</feature>
<feature type="modified residue" description="N-acetylserine" evidence="2">
    <location>
        <position position="2"/>
    </location>
</feature>
<feature type="modified residue" description="Phosphoserine" evidence="2">
    <location>
        <position position="304"/>
    </location>
</feature>